<reference key="1">
    <citation type="journal article" date="2007" name="Science">
        <title>Legumes symbioses: absence of nod genes in photosynthetic bradyrhizobia.</title>
        <authorList>
            <person name="Giraud E."/>
            <person name="Moulin L."/>
            <person name="Vallenet D."/>
            <person name="Barbe V."/>
            <person name="Cytryn E."/>
            <person name="Avarre J.-C."/>
            <person name="Jaubert M."/>
            <person name="Simon D."/>
            <person name="Cartieaux F."/>
            <person name="Prin Y."/>
            <person name="Bena G."/>
            <person name="Hannibal L."/>
            <person name="Fardoux J."/>
            <person name="Kojadinovic M."/>
            <person name="Vuillet L."/>
            <person name="Lajus A."/>
            <person name="Cruveiller S."/>
            <person name="Rouy Z."/>
            <person name="Mangenot S."/>
            <person name="Segurens B."/>
            <person name="Dossat C."/>
            <person name="Franck W.L."/>
            <person name="Chang W.-S."/>
            <person name="Saunders E."/>
            <person name="Bruce D."/>
            <person name="Richardson P."/>
            <person name="Normand P."/>
            <person name="Dreyfus B."/>
            <person name="Pignol D."/>
            <person name="Stacey G."/>
            <person name="Emerich D."/>
            <person name="Vermeglio A."/>
            <person name="Medigue C."/>
            <person name="Sadowsky M."/>
        </authorList>
    </citation>
    <scope>NUCLEOTIDE SEQUENCE [LARGE SCALE GENOMIC DNA]</scope>
    <source>
        <strain>ORS 278</strain>
    </source>
</reference>
<organism>
    <name type="scientific">Bradyrhizobium sp. (strain ORS 278)</name>
    <dbReference type="NCBI Taxonomy" id="114615"/>
    <lineage>
        <taxon>Bacteria</taxon>
        <taxon>Pseudomonadati</taxon>
        <taxon>Pseudomonadota</taxon>
        <taxon>Alphaproteobacteria</taxon>
        <taxon>Hyphomicrobiales</taxon>
        <taxon>Nitrobacteraceae</taxon>
        <taxon>Bradyrhizobium</taxon>
    </lineage>
</organism>
<keyword id="KW-0963">Cytoplasm</keyword>
<keyword id="KW-1185">Reference proteome</keyword>
<keyword id="KW-0694">RNA-binding</keyword>
<proteinExistence type="inferred from homology"/>
<comment type="function">
    <text evidence="1">Required for rescue of stalled ribosomes mediated by trans-translation. Binds to transfer-messenger RNA (tmRNA), required for stable association of tmRNA with ribosomes. tmRNA and SmpB together mimic tRNA shape, replacing the anticodon stem-loop with SmpB. tmRNA is encoded by the ssrA gene; the 2 termini fold to resemble tRNA(Ala) and it encodes a 'tag peptide', a short internal open reading frame. During trans-translation Ala-aminoacylated tmRNA acts like a tRNA, entering the A-site of stalled ribosomes, displacing the stalled mRNA. The ribosome then switches to translate the ORF on the tmRNA; the nascent peptide is terminated with the 'tag peptide' encoded by the tmRNA and targeted for degradation. The ribosome is freed to recommence translation, which seems to be the essential function of trans-translation.</text>
</comment>
<comment type="subcellular location">
    <subcellularLocation>
        <location evidence="1">Cytoplasm</location>
    </subcellularLocation>
    <text evidence="1">The tmRNA-SmpB complex associates with stalled 70S ribosomes.</text>
</comment>
<comment type="similarity">
    <text evidence="1">Belongs to the SmpB family.</text>
</comment>
<evidence type="ECO:0000255" key="1">
    <source>
        <dbReference type="HAMAP-Rule" id="MF_00023"/>
    </source>
</evidence>
<evidence type="ECO:0000256" key="2">
    <source>
        <dbReference type="SAM" id="MobiDB-lite"/>
    </source>
</evidence>
<dbReference type="EMBL" id="CU234118">
    <property type="protein sequence ID" value="CAL78213.1"/>
    <property type="molecule type" value="Genomic_DNA"/>
</dbReference>
<dbReference type="RefSeq" id="WP_008962897.1">
    <property type="nucleotide sequence ID" value="NC_009445.1"/>
</dbReference>
<dbReference type="SMR" id="A4YWD7"/>
<dbReference type="STRING" id="114615.BRADO4473"/>
<dbReference type="KEGG" id="bra:BRADO4473"/>
<dbReference type="eggNOG" id="COG0691">
    <property type="taxonomic scope" value="Bacteria"/>
</dbReference>
<dbReference type="HOGENOM" id="CLU_108953_0_1_5"/>
<dbReference type="OrthoDB" id="9805462at2"/>
<dbReference type="Proteomes" id="UP000001994">
    <property type="component" value="Chromosome"/>
</dbReference>
<dbReference type="GO" id="GO:0005829">
    <property type="term" value="C:cytosol"/>
    <property type="evidence" value="ECO:0007669"/>
    <property type="project" value="TreeGrafter"/>
</dbReference>
<dbReference type="GO" id="GO:0003723">
    <property type="term" value="F:RNA binding"/>
    <property type="evidence" value="ECO:0007669"/>
    <property type="project" value="UniProtKB-UniRule"/>
</dbReference>
<dbReference type="GO" id="GO:0070929">
    <property type="term" value="P:trans-translation"/>
    <property type="evidence" value="ECO:0007669"/>
    <property type="project" value="UniProtKB-UniRule"/>
</dbReference>
<dbReference type="CDD" id="cd09294">
    <property type="entry name" value="SmpB"/>
    <property type="match status" value="1"/>
</dbReference>
<dbReference type="Gene3D" id="2.40.280.10">
    <property type="match status" value="1"/>
</dbReference>
<dbReference type="HAMAP" id="MF_00023">
    <property type="entry name" value="SmpB"/>
    <property type="match status" value="1"/>
</dbReference>
<dbReference type="InterPro" id="IPR023620">
    <property type="entry name" value="SmpB"/>
</dbReference>
<dbReference type="InterPro" id="IPR000037">
    <property type="entry name" value="SsrA-bd_prot"/>
</dbReference>
<dbReference type="InterPro" id="IPR020081">
    <property type="entry name" value="SsrA-bd_prot_CS"/>
</dbReference>
<dbReference type="NCBIfam" id="NF003843">
    <property type="entry name" value="PRK05422.1"/>
    <property type="match status" value="1"/>
</dbReference>
<dbReference type="NCBIfam" id="TIGR00086">
    <property type="entry name" value="smpB"/>
    <property type="match status" value="1"/>
</dbReference>
<dbReference type="PANTHER" id="PTHR30308:SF2">
    <property type="entry name" value="SSRA-BINDING PROTEIN"/>
    <property type="match status" value="1"/>
</dbReference>
<dbReference type="PANTHER" id="PTHR30308">
    <property type="entry name" value="TMRNA-BINDING COMPONENT OF TRANS-TRANSLATION TAGGING COMPLEX"/>
    <property type="match status" value="1"/>
</dbReference>
<dbReference type="Pfam" id="PF01668">
    <property type="entry name" value="SmpB"/>
    <property type="match status" value="1"/>
</dbReference>
<dbReference type="SUPFAM" id="SSF74982">
    <property type="entry name" value="Small protein B (SmpB)"/>
    <property type="match status" value="1"/>
</dbReference>
<dbReference type="PROSITE" id="PS01317">
    <property type="entry name" value="SSRP"/>
    <property type="match status" value="1"/>
</dbReference>
<accession>A4YWD7</accession>
<gene>
    <name evidence="1" type="primary">smpB</name>
    <name type="ordered locus">BRADO4473</name>
</gene>
<name>SSRP_BRASO</name>
<sequence length="157" mass="17949">MANKNEPKITVAAENRKARFNYAIEDTIEAGIALTGTEVKSVRGGKSTIAESYADSRDGEIWLINANIPEYLQANRFNHEPKRPRKLLLHRKQINKLMGAVEREGMTLIPLKLYFNERGRAKLLLAVAKGKKLHDKRESEKKRDWGREKGRLLRARG</sequence>
<protein>
    <recommendedName>
        <fullName evidence="1">SsrA-binding protein</fullName>
    </recommendedName>
    <alternativeName>
        <fullName evidence="1">Small protein B</fullName>
    </alternativeName>
</protein>
<feature type="chain" id="PRO_1000002006" description="SsrA-binding protein">
    <location>
        <begin position="1"/>
        <end position="157"/>
    </location>
</feature>
<feature type="region of interest" description="Disordered" evidence="2">
    <location>
        <begin position="133"/>
        <end position="157"/>
    </location>
</feature>
<feature type="compositionally biased region" description="Basic and acidic residues" evidence="2">
    <location>
        <begin position="135"/>
        <end position="151"/>
    </location>
</feature>